<dbReference type="EC" id="4.1.1.22"/>
<dbReference type="EMBL" id="J02880">
    <property type="protein sequence ID" value="AAA83526.1"/>
    <property type="molecule type" value="Genomic_DNA"/>
</dbReference>
<dbReference type="EMBL" id="CP000246">
    <property type="protein sequence ID" value="ABG84693.1"/>
    <property type="molecule type" value="Genomic_DNA"/>
</dbReference>
<dbReference type="PIR" id="A33770">
    <property type="entry name" value="DCCLHP"/>
</dbReference>
<dbReference type="SMR" id="Q0TU55"/>
<dbReference type="STRING" id="195103.CPF_0378"/>
<dbReference type="MEROPS" id="X39.001"/>
<dbReference type="PaxDb" id="195103-CPF_0378"/>
<dbReference type="KEGG" id="cpf:CPF_0378"/>
<dbReference type="eggNOG" id="ENOG502Z80V">
    <property type="taxonomic scope" value="Bacteria"/>
</dbReference>
<dbReference type="HOGENOM" id="CLU_942196_0_0_9"/>
<dbReference type="SABIO-RK" id="Q0TU55"/>
<dbReference type="Proteomes" id="UP000001823">
    <property type="component" value="Chromosome"/>
</dbReference>
<dbReference type="GO" id="GO:0004398">
    <property type="term" value="F:histidine decarboxylase activity"/>
    <property type="evidence" value="ECO:0007669"/>
    <property type="project" value="UniProtKB-EC"/>
</dbReference>
<dbReference type="GO" id="GO:0006547">
    <property type="term" value="P:L-histidine metabolic process"/>
    <property type="evidence" value="ECO:0007669"/>
    <property type="project" value="InterPro"/>
</dbReference>
<dbReference type="Gene3D" id="4.10.510.10">
    <property type="entry name" value="Pyruvoyl-Dependent Histidine Decarboxylas, subunit A"/>
    <property type="match status" value="1"/>
</dbReference>
<dbReference type="Gene3D" id="3.50.20.10">
    <property type="entry name" value="Pyruvoyl-Dependent Histidine Decarboxylase, subunit B"/>
    <property type="match status" value="1"/>
</dbReference>
<dbReference type="InterPro" id="IPR003427">
    <property type="entry name" value="His_de-COase_proenz"/>
</dbReference>
<dbReference type="InterPro" id="IPR016106">
    <property type="entry name" value="Pyr-dep_his-deCO2ase_N"/>
</dbReference>
<dbReference type="InterPro" id="IPR016104">
    <property type="entry name" value="Pyr-dep_his/arg-deCO2ase"/>
</dbReference>
<dbReference type="InterPro" id="IPR016105">
    <property type="entry name" value="Pyr-dep_his/arg-deCO2ase_sand"/>
</dbReference>
<dbReference type="NCBIfam" id="TIGR00541">
    <property type="entry name" value="hisDCase_pyru"/>
    <property type="match status" value="1"/>
</dbReference>
<dbReference type="Pfam" id="PF02329">
    <property type="entry name" value="HDC"/>
    <property type="match status" value="1"/>
</dbReference>
<dbReference type="PIRSF" id="PIRSF001341">
    <property type="entry name" value="His_decarboxylas"/>
    <property type="match status" value="1"/>
</dbReference>
<dbReference type="SFLD" id="SFLDS00055">
    <property type="entry name" value="Pyruvoyl-Dependent_Histidine/A"/>
    <property type="match status" value="1"/>
</dbReference>
<dbReference type="SFLD" id="SFLDF00466">
    <property type="entry name" value="Pyruvoyl-dependent_histidine_d"/>
    <property type="match status" value="1"/>
</dbReference>
<dbReference type="SFLD" id="SFLDG01171">
    <property type="entry name" value="Pyruvoyl-dependent_histidine_d"/>
    <property type="match status" value="1"/>
</dbReference>
<dbReference type="SUPFAM" id="SSF56271">
    <property type="entry name" value="Pyruvoyl-dependent histidine and arginine decarboxylases"/>
    <property type="match status" value="1"/>
</dbReference>
<proteinExistence type="inferred from homology"/>
<name>DCHS_CLOP1</name>
<sequence length="320" mass="35524">MNKNLEANRNRTLSEGIHKNIKVRAPKIDKTAISPYDRYCDGYGMPGAYGNGYVSVLKVSVGTVKKTDDILLDGIVSYDRAEINDAYVGQINMLTASSFCGVAGQVWGHDLATHDSIANDEIKPLYELKQFDGTPLKVYDAKPLLEAGIELFGTEKNRRFTTAPGAHVICANKSATAYRPKENRPLKEGEAYGVWSFIALSLSNDRDHCADLFIEDAGLWTKNDNPEDLKKFLEDHRKAVTWSVVECGRDSHVVFERTYIGFAYVIMKPGEIGNALTCAPYVTLARDAVPSEGFPSLNRISLSQWLDDMNFDSLVNPSKK</sequence>
<keyword id="KW-0210">Decarboxylase</keyword>
<keyword id="KW-0456">Lyase</keyword>
<keyword id="KW-0670">Pyruvate</keyword>
<keyword id="KW-0865">Zymogen</keyword>
<comment type="catalytic activity">
    <reaction>
        <text>L-histidine + H(+) = histamine + CO2</text>
        <dbReference type="Rhea" id="RHEA:20840"/>
        <dbReference type="ChEBI" id="CHEBI:15378"/>
        <dbReference type="ChEBI" id="CHEBI:16526"/>
        <dbReference type="ChEBI" id="CHEBI:57595"/>
        <dbReference type="ChEBI" id="CHEBI:58432"/>
        <dbReference type="EC" id="4.1.1.22"/>
    </reaction>
</comment>
<comment type="cofactor">
    <cofactor>
        <name>pyruvate</name>
        <dbReference type="ChEBI" id="CHEBI:15361"/>
    </cofactor>
    <text>Binds 1 pyruvoyl group covalently per subunit.</text>
</comment>
<comment type="subunit">
    <text>The proenzyme is a hexamer of identical pi chains; each pi chain monomer is cleaved to form a small (or beta) chain and a large (or alpha) chain by non-hydrolytic self-catalysis.</text>
</comment>
<reference key="1">
    <citation type="journal article" date="1990" name="Biochemistry">
        <title>Cloning, sequencing, expression, and site-directed mutagenesis of the gene from Clostridium perfringens encoding pyruvoyl-dependent histidine decarboxylase.</title>
        <authorList>
            <person name="van Poelje P.D."/>
            <person name="Snell E.E."/>
        </authorList>
    </citation>
    <scope>NUCLEOTIDE SEQUENCE [GENOMIC DNA]</scope>
</reference>
<reference key="2">
    <citation type="journal article" date="2006" name="Genome Res.">
        <title>Skewed genomic variability in strains of the toxigenic bacterial pathogen, Clostridium perfringens.</title>
        <authorList>
            <person name="Myers G.S.A."/>
            <person name="Rasko D.A."/>
            <person name="Cheung J.K."/>
            <person name="Ravel J."/>
            <person name="Seshadri R."/>
            <person name="DeBoy R.T."/>
            <person name="Ren Q."/>
            <person name="Varga J."/>
            <person name="Awad M.M."/>
            <person name="Brinkac L.M."/>
            <person name="Daugherty S.C."/>
            <person name="Haft D.H."/>
            <person name="Dodson R.J."/>
            <person name="Madupu R."/>
            <person name="Nelson W.C."/>
            <person name="Rosovitz M.J."/>
            <person name="Sullivan S.A."/>
            <person name="Khouri H."/>
            <person name="Dimitrov G.I."/>
            <person name="Watkins K.L."/>
            <person name="Mulligan S."/>
            <person name="Benton J."/>
            <person name="Radune D."/>
            <person name="Fisher D.J."/>
            <person name="Atkins H.S."/>
            <person name="Hiscox T."/>
            <person name="Jost B.H."/>
            <person name="Billington S.J."/>
            <person name="Songer J.G."/>
            <person name="McClane B.A."/>
            <person name="Titball R.W."/>
            <person name="Rood J.I."/>
            <person name="Melville S.B."/>
            <person name="Paulsen I.T."/>
        </authorList>
    </citation>
    <scope>NUCLEOTIDE SEQUENCE [LARGE SCALE GENOMIC DNA]</scope>
    <source>
        <strain>ATCC 13124 / DSM 756 / JCM 1290 / NCIMB 6125 / NCTC 8237 / S 107 / Type A</strain>
    </source>
</reference>
<feature type="initiator methionine" description="Removed" evidence="1">
    <location>
        <position position="1"/>
    </location>
</feature>
<feature type="propeptide" id="PRO_0000273586" evidence="1">
    <location>
        <begin position="2"/>
        <end position="11"/>
    </location>
</feature>
<feature type="chain" id="PRO_0000273587" description="Histidine decarboxylase beta chain">
    <location>
        <begin position="12"/>
        <end position="97"/>
    </location>
</feature>
<feature type="chain" id="PRO_0000273588" description="Histidine decarboxylase alpha chain">
    <location>
        <begin position="98"/>
        <end position="320"/>
    </location>
</feature>
<feature type="active site" description="Proton donor" evidence="1">
    <location>
        <position position="215"/>
    </location>
</feature>
<feature type="site" description="Cleavage (non-hydrolytic)" evidence="1">
    <location>
        <begin position="97"/>
        <end position="98"/>
    </location>
</feature>
<feature type="modified residue" description="Pyruvic acid (Ser)" evidence="1">
    <location>
        <position position="98"/>
    </location>
</feature>
<protein>
    <recommendedName>
        <fullName>Histidine decarboxylase proenzyme</fullName>
        <ecNumber>4.1.1.22</ecNumber>
    </recommendedName>
    <alternativeName>
        <fullName>Pi chain</fullName>
    </alternativeName>
    <component>
        <recommendedName>
            <fullName>Histidine decarboxylase beta chain</fullName>
        </recommendedName>
    </component>
    <component>
        <recommendedName>
            <fullName>Histidine decarboxylase alpha chain</fullName>
        </recommendedName>
    </component>
</protein>
<evidence type="ECO:0000250" key="1"/>
<accession>Q0TU55</accession>
<accession>P04194</accession>
<gene>
    <name type="primary">hdc</name>
    <name type="ordered locus">CPF_0378</name>
</gene>
<organism>
    <name type="scientific">Clostridium perfringens (strain ATCC 13124 / DSM 756 / JCM 1290 / NCIMB 6125 / NCTC 8237 / Type A)</name>
    <dbReference type="NCBI Taxonomy" id="195103"/>
    <lineage>
        <taxon>Bacteria</taxon>
        <taxon>Bacillati</taxon>
        <taxon>Bacillota</taxon>
        <taxon>Clostridia</taxon>
        <taxon>Eubacteriales</taxon>
        <taxon>Clostridiaceae</taxon>
        <taxon>Clostridium</taxon>
    </lineage>
</organism>